<proteinExistence type="inferred from homology"/>
<feature type="chain" id="PRO_1000147544" description="Ribosomal RNA large subunit methyltransferase H">
    <location>
        <begin position="1"/>
        <end position="157"/>
    </location>
</feature>
<feature type="binding site" evidence="1">
    <location>
        <position position="74"/>
    </location>
    <ligand>
        <name>S-adenosyl-L-methionine</name>
        <dbReference type="ChEBI" id="CHEBI:59789"/>
    </ligand>
</feature>
<feature type="binding site" evidence="1">
    <location>
        <position position="106"/>
    </location>
    <ligand>
        <name>S-adenosyl-L-methionine</name>
        <dbReference type="ChEBI" id="CHEBI:59789"/>
    </ligand>
</feature>
<feature type="binding site" evidence="1">
    <location>
        <begin position="125"/>
        <end position="130"/>
    </location>
    <ligand>
        <name>S-adenosyl-L-methionine</name>
        <dbReference type="ChEBI" id="CHEBI:59789"/>
    </ligand>
</feature>
<accession>B8IYS8</accession>
<name>RLMH_DESDA</name>
<dbReference type="EC" id="2.1.1.177" evidence="1"/>
<dbReference type="EMBL" id="CP001358">
    <property type="protein sequence ID" value="ACL48655.1"/>
    <property type="molecule type" value="Genomic_DNA"/>
</dbReference>
<dbReference type="SMR" id="B8IYS8"/>
<dbReference type="STRING" id="525146.Ddes_0747"/>
<dbReference type="KEGG" id="dds:Ddes_0747"/>
<dbReference type="eggNOG" id="COG1576">
    <property type="taxonomic scope" value="Bacteria"/>
</dbReference>
<dbReference type="HOGENOM" id="CLU_100552_1_0_7"/>
<dbReference type="GO" id="GO:0005737">
    <property type="term" value="C:cytoplasm"/>
    <property type="evidence" value="ECO:0007669"/>
    <property type="project" value="UniProtKB-SubCell"/>
</dbReference>
<dbReference type="GO" id="GO:0070038">
    <property type="term" value="F:rRNA (pseudouridine-N3-)-methyltransferase activity"/>
    <property type="evidence" value="ECO:0007669"/>
    <property type="project" value="UniProtKB-UniRule"/>
</dbReference>
<dbReference type="CDD" id="cd18081">
    <property type="entry name" value="RlmH-like"/>
    <property type="match status" value="1"/>
</dbReference>
<dbReference type="Gene3D" id="3.40.1280.10">
    <property type="match status" value="1"/>
</dbReference>
<dbReference type="HAMAP" id="MF_00658">
    <property type="entry name" value="23SrRNA_methyltr_H"/>
    <property type="match status" value="1"/>
</dbReference>
<dbReference type="InterPro" id="IPR029028">
    <property type="entry name" value="Alpha/beta_knot_MTases"/>
</dbReference>
<dbReference type="InterPro" id="IPR003742">
    <property type="entry name" value="RlmH-like"/>
</dbReference>
<dbReference type="InterPro" id="IPR029026">
    <property type="entry name" value="tRNA_m1G_MTases_N"/>
</dbReference>
<dbReference type="PANTHER" id="PTHR33603">
    <property type="entry name" value="METHYLTRANSFERASE"/>
    <property type="match status" value="1"/>
</dbReference>
<dbReference type="PANTHER" id="PTHR33603:SF1">
    <property type="entry name" value="RIBOSOMAL RNA LARGE SUBUNIT METHYLTRANSFERASE H"/>
    <property type="match status" value="1"/>
</dbReference>
<dbReference type="Pfam" id="PF02590">
    <property type="entry name" value="SPOUT_MTase"/>
    <property type="match status" value="1"/>
</dbReference>
<dbReference type="PIRSF" id="PIRSF004505">
    <property type="entry name" value="MT_bac"/>
    <property type="match status" value="1"/>
</dbReference>
<dbReference type="SUPFAM" id="SSF75217">
    <property type="entry name" value="alpha/beta knot"/>
    <property type="match status" value="1"/>
</dbReference>
<protein>
    <recommendedName>
        <fullName evidence="1">Ribosomal RNA large subunit methyltransferase H</fullName>
        <ecNumber evidence="1">2.1.1.177</ecNumber>
    </recommendedName>
    <alternativeName>
        <fullName evidence="1">23S rRNA (pseudouridine1915-N3)-methyltransferase</fullName>
    </alternativeName>
    <alternativeName>
        <fullName evidence="1">23S rRNA m3Psi1915 methyltransferase</fullName>
    </alternativeName>
    <alternativeName>
        <fullName evidence="1">rRNA (pseudouridine-N3-)-methyltransferase RlmH</fullName>
    </alternativeName>
</protein>
<evidence type="ECO:0000255" key="1">
    <source>
        <dbReference type="HAMAP-Rule" id="MF_00658"/>
    </source>
</evidence>
<sequence>MAGKPLRCISVGKLKTPFWKDAAAHYLTRIKRWRHLEYTEVRDGDAALPPDQRNALEGRRIVEALAPQDVALVLDEHGQKLSSPQLAALLRRLDQEARGRACFVVGGAWGLDDSVRQRAFKVLSLSDMTLPHELARVVLLEQIYRAECILRKVPYHH</sequence>
<comment type="function">
    <text evidence="1">Specifically methylates the pseudouridine at position 1915 (m3Psi1915) in 23S rRNA.</text>
</comment>
<comment type="catalytic activity">
    <reaction evidence="1">
        <text>pseudouridine(1915) in 23S rRNA + S-adenosyl-L-methionine = N(3)-methylpseudouridine(1915) in 23S rRNA + S-adenosyl-L-homocysteine + H(+)</text>
        <dbReference type="Rhea" id="RHEA:42752"/>
        <dbReference type="Rhea" id="RHEA-COMP:10221"/>
        <dbReference type="Rhea" id="RHEA-COMP:10222"/>
        <dbReference type="ChEBI" id="CHEBI:15378"/>
        <dbReference type="ChEBI" id="CHEBI:57856"/>
        <dbReference type="ChEBI" id="CHEBI:59789"/>
        <dbReference type="ChEBI" id="CHEBI:65314"/>
        <dbReference type="ChEBI" id="CHEBI:74486"/>
        <dbReference type="EC" id="2.1.1.177"/>
    </reaction>
</comment>
<comment type="subunit">
    <text evidence="1">Homodimer.</text>
</comment>
<comment type="subcellular location">
    <subcellularLocation>
        <location evidence="1">Cytoplasm</location>
    </subcellularLocation>
</comment>
<comment type="similarity">
    <text evidence="1">Belongs to the RNA methyltransferase RlmH family.</text>
</comment>
<reference key="1">
    <citation type="submission" date="2009-01" db="EMBL/GenBank/DDBJ databases">
        <title>Complete sequence of Desulfovibrio desulfuricans subsp. desulfuricans str. ATCC 27774.</title>
        <authorList>
            <consortium name="US DOE Joint Genome Institute"/>
            <person name="Lucas S."/>
            <person name="Copeland A."/>
            <person name="Lapidus A."/>
            <person name="Glavina del Rio T."/>
            <person name="Tice H."/>
            <person name="Bruce D."/>
            <person name="Goodwin L."/>
            <person name="Pitluck S."/>
            <person name="Sims D."/>
            <person name="Lu M."/>
            <person name="Kiss H."/>
            <person name="Meineke L."/>
            <person name="Brettin T."/>
            <person name="Detter J.C."/>
            <person name="Han C."/>
            <person name="Larimer F."/>
            <person name="Land M."/>
            <person name="Hauser L."/>
            <person name="Kyrpides N."/>
            <person name="Ovchinnikova G."/>
            <person name="Hazen T.C."/>
        </authorList>
    </citation>
    <scope>NUCLEOTIDE SEQUENCE [LARGE SCALE GENOMIC DNA]</scope>
    <source>
        <strain>ATCC 27774 / DSM 6949 / MB</strain>
    </source>
</reference>
<gene>
    <name evidence="1" type="primary">rlmH</name>
    <name type="ordered locus">Ddes_0747</name>
</gene>
<keyword id="KW-0963">Cytoplasm</keyword>
<keyword id="KW-0489">Methyltransferase</keyword>
<keyword id="KW-0698">rRNA processing</keyword>
<keyword id="KW-0949">S-adenosyl-L-methionine</keyword>
<keyword id="KW-0808">Transferase</keyword>
<organism>
    <name type="scientific">Desulfovibrio desulfuricans (strain ATCC 27774 / DSM 6949 / MB)</name>
    <dbReference type="NCBI Taxonomy" id="525146"/>
    <lineage>
        <taxon>Bacteria</taxon>
        <taxon>Pseudomonadati</taxon>
        <taxon>Thermodesulfobacteriota</taxon>
        <taxon>Desulfovibrionia</taxon>
        <taxon>Desulfovibrionales</taxon>
        <taxon>Desulfovibrionaceae</taxon>
        <taxon>Desulfovibrio</taxon>
    </lineage>
</organism>